<protein>
    <recommendedName>
        <fullName evidence="1">Protein DsrB</fullName>
    </recommendedName>
</protein>
<reference key="1">
    <citation type="journal article" date="2001" name="Nature">
        <title>Complete genome sequence of Salmonella enterica serovar Typhimurium LT2.</title>
        <authorList>
            <person name="McClelland M."/>
            <person name="Sanderson K.E."/>
            <person name="Spieth J."/>
            <person name="Clifton S.W."/>
            <person name="Latreille P."/>
            <person name="Courtney L."/>
            <person name="Porwollik S."/>
            <person name="Ali J."/>
            <person name="Dante M."/>
            <person name="Du F."/>
            <person name="Hou S."/>
            <person name="Layman D."/>
            <person name="Leonard S."/>
            <person name="Nguyen C."/>
            <person name="Scott K."/>
            <person name="Holmes A."/>
            <person name="Grewal N."/>
            <person name="Mulvaney E."/>
            <person name="Ryan E."/>
            <person name="Sun H."/>
            <person name="Florea L."/>
            <person name="Miller W."/>
            <person name="Stoneking T."/>
            <person name="Nhan M."/>
            <person name="Waterston R."/>
            <person name="Wilson R.K."/>
        </authorList>
    </citation>
    <scope>NUCLEOTIDE SEQUENCE [LARGE SCALE GENOMIC DNA]</scope>
    <source>
        <strain>LT2 / SGSC1412 / ATCC 700720</strain>
    </source>
</reference>
<dbReference type="EMBL" id="AE006468">
    <property type="status" value="NOT_ANNOTATED_CDS"/>
    <property type="molecule type" value="Genomic_DNA"/>
</dbReference>
<dbReference type="SMR" id="P0C0T3"/>
<dbReference type="PATRIC" id="fig|99287.12.peg.2100"/>
<dbReference type="OMA" id="IWFFNEL"/>
<dbReference type="PhylomeDB" id="P0C0T3"/>
<dbReference type="Proteomes" id="UP000001014">
    <property type="component" value="Chromosome"/>
</dbReference>
<dbReference type="HAMAP" id="MF_01549">
    <property type="entry name" value="DsrB"/>
    <property type="match status" value="1"/>
</dbReference>
<dbReference type="InterPro" id="IPR019717">
    <property type="entry name" value="Dextransucrase_DSRB"/>
</dbReference>
<dbReference type="NCBIfam" id="NF007981">
    <property type="entry name" value="PRK10708.1"/>
    <property type="match status" value="1"/>
</dbReference>
<dbReference type="Pfam" id="PF10781">
    <property type="entry name" value="DSRB"/>
    <property type="match status" value="1"/>
</dbReference>
<accession>P0C0T3</accession>
<proteinExistence type="inferred from homology"/>
<comment type="similarity">
    <text evidence="1">Belongs to the DsrB family.</text>
</comment>
<sequence length="64" mass="7205">MKVNDRVTVKTDGGPRRPGVVLAVEEFSEGTMYLVSLEDYPLGIWFFNESGHQDGIFVEKAEQD</sequence>
<gene>
    <name evidence="1" type="primary">dsrB</name>
    <name type="ordered locus">STM1983</name>
</gene>
<name>DSRB_SALTY</name>
<organism>
    <name type="scientific">Salmonella typhimurium (strain LT2 / SGSC1412 / ATCC 700720)</name>
    <dbReference type="NCBI Taxonomy" id="99287"/>
    <lineage>
        <taxon>Bacteria</taxon>
        <taxon>Pseudomonadati</taxon>
        <taxon>Pseudomonadota</taxon>
        <taxon>Gammaproteobacteria</taxon>
        <taxon>Enterobacterales</taxon>
        <taxon>Enterobacteriaceae</taxon>
        <taxon>Salmonella</taxon>
    </lineage>
</organism>
<keyword id="KW-1185">Reference proteome</keyword>
<feature type="chain" id="PRO_0000201913" description="Protein DsrB">
    <location>
        <begin position="1"/>
        <end position="64"/>
    </location>
</feature>
<evidence type="ECO:0000255" key="1">
    <source>
        <dbReference type="HAMAP-Rule" id="MF_01549"/>
    </source>
</evidence>